<sequence>MSTKLCQRIARTATLSPTSLVPRSSRLIPIVSSAAVRPSSAIPTRRPFSTTESRYLANVQAGMDKIRDAIAENFGGPAHNIGTTSFSLDDTPDLSGKVAVITGGSEGIGYGVAYTLIKHNLSKLFILSRKREVFDGALASIASELGQDKADRVHWIQCNLEDWAQTAVVAEQIKKDTDRLDILVNNSGRGIMTAGLTSYGVDKHMATNHMGHVVLTSHLLPLLQKTAEETGETVRISNQSSNLHSAAPKGTQFKSLEEINEDVGPNGQYGRSKLAGILYARYFDREVTRKMEGSKGRVVMNATHPGFVSTKQSVKDIHEPYPISGFAISHLAEPFKKDQFEGAVPTVYAVTMANEGGQWICAPAKAEAGTDLAQSDELADNLMELTRKIISEKTWPKSVAKGCPMDDVVVHV</sequence>
<feature type="transit peptide" description="Mitochondrion" evidence="3">
    <location>
        <begin position="1"/>
        <end position="55"/>
    </location>
</feature>
<feature type="chain" id="PRO_0000031964" description="Putative oxidoreductase bli-4, mitochondrial">
    <location>
        <begin position="56"/>
        <end position="412"/>
    </location>
</feature>
<feature type="active site" description="Proton donor" evidence="2">
    <location>
        <position position="269"/>
    </location>
</feature>
<feature type="active site" description="Lowers pKa of active site Tyr" evidence="2">
    <location>
        <position position="273"/>
    </location>
</feature>
<feature type="binding site" evidence="1">
    <location>
        <position position="108"/>
    </location>
    <ligand>
        <name>NADP(+)</name>
        <dbReference type="ChEBI" id="CHEBI:58349"/>
    </ligand>
</feature>
<feature type="binding site" evidence="1">
    <location>
        <position position="120"/>
    </location>
    <ligand>
        <name>NADP(+)</name>
        <dbReference type="ChEBI" id="CHEBI:58349"/>
    </ligand>
</feature>
<feature type="binding site" evidence="2">
    <location>
        <position position="186"/>
    </location>
    <ligand>
        <name>NADP(+)</name>
        <dbReference type="ChEBI" id="CHEBI:58349"/>
    </ligand>
</feature>
<feature type="binding site" evidence="2">
    <location>
        <position position="269"/>
    </location>
    <ligand>
        <name>NADP(+)</name>
        <dbReference type="ChEBI" id="CHEBI:58349"/>
    </ligand>
</feature>
<feature type="binding site" evidence="2">
    <location>
        <position position="273"/>
    </location>
    <ligand>
        <name>NADP(+)</name>
        <dbReference type="ChEBI" id="CHEBI:58349"/>
    </ligand>
</feature>
<feature type="binding site" evidence="2">
    <location>
        <position position="308"/>
    </location>
    <ligand>
        <name>NADP(+)</name>
        <dbReference type="ChEBI" id="CHEBI:58349"/>
    </ligand>
</feature>
<feature type="binding site" evidence="1">
    <location>
        <position position="310"/>
    </location>
    <ligand>
        <name>NADP(+)</name>
        <dbReference type="ChEBI" id="CHEBI:58349"/>
    </ligand>
</feature>
<feature type="binding site" evidence="2">
    <location>
        <position position="312"/>
    </location>
    <ligand>
        <name>NADP(+)</name>
        <dbReference type="ChEBI" id="CHEBI:58349"/>
    </ligand>
</feature>
<organism>
    <name type="scientific">Neurospora crassa (strain ATCC 24698 / 74-OR23-1A / CBS 708.71 / DSM 1257 / FGSC 987)</name>
    <dbReference type="NCBI Taxonomy" id="367110"/>
    <lineage>
        <taxon>Eukaryota</taxon>
        <taxon>Fungi</taxon>
        <taxon>Dikarya</taxon>
        <taxon>Ascomycota</taxon>
        <taxon>Pezizomycotina</taxon>
        <taxon>Sordariomycetes</taxon>
        <taxon>Sordariomycetidae</taxon>
        <taxon>Sordariales</taxon>
        <taxon>Sordariaceae</taxon>
        <taxon>Neurospora</taxon>
    </lineage>
</organism>
<comment type="function">
    <text>May play a role as an NAD-dependent dehydrogenase in the mitochondria.</text>
</comment>
<comment type="subcellular location">
    <subcellularLocation>
        <location>Mitochondrion</location>
    </subcellularLocation>
</comment>
<comment type="induction">
    <text>By blue light.</text>
</comment>
<comment type="similarity">
    <text evidence="4">Belongs to the short-chain dehydrogenases/reductases (SDR) family.</text>
</comment>
<protein>
    <recommendedName>
        <fullName>Putative oxidoreductase bli-4, mitochondrial</fullName>
        <ecNumber>1.-.-.-</ecNumber>
    </recommendedName>
    <alternativeName>
        <fullName>Blue light-induced protein 4</fullName>
    </alternativeName>
</protein>
<dbReference type="EC" id="1.-.-.-"/>
<dbReference type="EMBL" id="X89499">
    <property type="protein sequence ID" value="CAA61670.1"/>
    <property type="molecule type" value="Genomic_DNA"/>
</dbReference>
<dbReference type="EMBL" id="AL390354">
    <property type="protein sequence ID" value="CAB99393.1"/>
    <property type="molecule type" value="Genomic_DNA"/>
</dbReference>
<dbReference type="EMBL" id="CM002237">
    <property type="protein sequence ID" value="EAA34324.3"/>
    <property type="molecule type" value="Genomic_DNA"/>
</dbReference>
<dbReference type="PIR" id="S72617">
    <property type="entry name" value="S72617"/>
</dbReference>
<dbReference type="RefSeq" id="XP_963560.3">
    <property type="nucleotide sequence ID" value="XM_958467.3"/>
</dbReference>
<dbReference type="SMR" id="Q92247"/>
<dbReference type="BioGRID" id="1981008">
    <property type="interactions" value="1"/>
</dbReference>
<dbReference type="STRING" id="367110.Q92247"/>
<dbReference type="PaxDb" id="5141-EFNCRP00000008621"/>
<dbReference type="EnsemblFungi" id="EAA34324">
    <property type="protein sequence ID" value="EAA34324"/>
    <property type="gene ID" value="NCU08699"/>
</dbReference>
<dbReference type="GeneID" id="3879739"/>
<dbReference type="KEGG" id="ncr:NCU08699"/>
<dbReference type="VEuPathDB" id="FungiDB:NCU08699"/>
<dbReference type="HOGENOM" id="CLU_010194_44_6_1"/>
<dbReference type="InParanoid" id="Q92247"/>
<dbReference type="OrthoDB" id="191139at2759"/>
<dbReference type="Proteomes" id="UP000001805">
    <property type="component" value="Chromosome 6, Linkage Group II"/>
</dbReference>
<dbReference type="GO" id="GO:0005739">
    <property type="term" value="C:mitochondrion"/>
    <property type="evidence" value="ECO:0007669"/>
    <property type="project" value="UniProtKB-SubCell"/>
</dbReference>
<dbReference type="GO" id="GO:0016491">
    <property type="term" value="F:oxidoreductase activity"/>
    <property type="evidence" value="ECO:0007669"/>
    <property type="project" value="UniProtKB-KW"/>
</dbReference>
<dbReference type="CDD" id="cd05327">
    <property type="entry name" value="retinol-DH_like_SDR_c_like"/>
    <property type="match status" value="1"/>
</dbReference>
<dbReference type="Gene3D" id="3.40.50.720">
    <property type="entry name" value="NAD(P)-binding Rossmann-like Domain"/>
    <property type="match status" value="1"/>
</dbReference>
<dbReference type="InterPro" id="IPR036291">
    <property type="entry name" value="NAD(P)-bd_dom_sf"/>
</dbReference>
<dbReference type="InterPro" id="IPR002347">
    <property type="entry name" value="SDR_fam"/>
</dbReference>
<dbReference type="PANTHER" id="PTHR24320:SF33">
    <property type="entry name" value="OXIDOREDUCTASE BLI-4, MITOCHONDRIAL-RELATED"/>
    <property type="match status" value="1"/>
</dbReference>
<dbReference type="PANTHER" id="PTHR24320">
    <property type="entry name" value="RETINOL DEHYDROGENASE"/>
    <property type="match status" value="1"/>
</dbReference>
<dbReference type="Pfam" id="PF00106">
    <property type="entry name" value="adh_short"/>
    <property type="match status" value="1"/>
</dbReference>
<dbReference type="PRINTS" id="PR00081">
    <property type="entry name" value="GDHRDH"/>
</dbReference>
<dbReference type="SUPFAM" id="SSF51735">
    <property type="entry name" value="NAD(P)-binding Rossmann-fold domains"/>
    <property type="match status" value="1"/>
</dbReference>
<proteinExistence type="evidence at protein level"/>
<evidence type="ECO:0000250" key="1">
    <source>
        <dbReference type="UniProtKB" id="L0E2Z4"/>
    </source>
</evidence>
<evidence type="ECO:0000250" key="2">
    <source>
        <dbReference type="UniProtKB" id="O93868"/>
    </source>
</evidence>
<evidence type="ECO:0000269" key="3">
    <source>
    </source>
</evidence>
<evidence type="ECO:0000305" key="4"/>
<name>BLI4_NEUCR</name>
<keyword id="KW-0903">Direct protein sequencing</keyword>
<keyword id="KW-0496">Mitochondrion</keyword>
<keyword id="KW-0521">NADP</keyword>
<keyword id="KW-0560">Oxidoreductase</keyword>
<keyword id="KW-1185">Reference proteome</keyword>
<keyword id="KW-0809">Transit peptide</keyword>
<reference key="1">
    <citation type="journal article" date="1996" name="Mol. Gen. Genet.">
        <title>bli-4, a gene that is rapidly induced by blue light, encodes a novel mitochondrial, short-chain alcohol dehydrogenase-like protein in Neurospora crassa.</title>
        <authorList>
            <person name="Bruchez J.J.P."/>
            <person name="Eberle J."/>
            <person name="Kohler W."/>
            <person name="Kruft V."/>
            <person name="Radford A."/>
            <person name="Russo V.E.A."/>
        </authorList>
    </citation>
    <scope>NUCLEOTIDE SEQUENCE [GENOMIC DNA]</scope>
    <scope>PROTEIN SEQUENCE OF 56-64</scope>
    <source>
        <strain>STA</strain>
    </source>
</reference>
<reference key="2">
    <citation type="journal article" date="2003" name="Nucleic Acids Res.">
        <title>What's in the genome of a filamentous fungus? Analysis of the Neurospora genome sequence.</title>
        <authorList>
            <person name="Mannhaupt G."/>
            <person name="Montrone C."/>
            <person name="Haase D."/>
            <person name="Mewes H.-W."/>
            <person name="Aign V."/>
            <person name="Hoheisel J.D."/>
            <person name="Fartmann B."/>
            <person name="Nyakatura G."/>
            <person name="Kempken F."/>
            <person name="Maier J."/>
            <person name="Schulte U."/>
        </authorList>
    </citation>
    <scope>NUCLEOTIDE SEQUENCE [LARGE SCALE GENOMIC DNA]</scope>
    <source>
        <strain>ATCC 24698 / 74-OR23-1A / CBS 708.71 / DSM 1257 / FGSC 987</strain>
    </source>
</reference>
<reference key="3">
    <citation type="journal article" date="2003" name="Nature">
        <title>The genome sequence of the filamentous fungus Neurospora crassa.</title>
        <authorList>
            <person name="Galagan J.E."/>
            <person name="Calvo S.E."/>
            <person name="Borkovich K.A."/>
            <person name="Selker E.U."/>
            <person name="Read N.D."/>
            <person name="Jaffe D.B."/>
            <person name="FitzHugh W."/>
            <person name="Ma L.-J."/>
            <person name="Smirnov S."/>
            <person name="Purcell S."/>
            <person name="Rehman B."/>
            <person name="Elkins T."/>
            <person name="Engels R."/>
            <person name="Wang S."/>
            <person name="Nielsen C.B."/>
            <person name="Butler J."/>
            <person name="Endrizzi M."/>
            <person name="Qui D."/>
            <person name="Ianakiev P."/>
            <person name="Bell-Pedersen D."/>
            <person name="Nelson M.A."/>
            <person name="Werner-Washburne M."/>
            <person name="Selitrennikoff C.P."/>
            <person name="Kinsey J.A."/>
            <person name="Braun E.L."/>
            <person name="Zelter A."/>
            <person name="Schulte U."/>
            <person name="Kothe G.O."/>
            <person name="Jedd G."/>
            <person name="Mewes H.-W."/>
            <person name="Staben C."/>
            <person name="Marcotte E."/>
            <person name="Greenberg D."/>
            <person name="Roy A."/>
            <person name="Foley K."/>
            <person name="Naylor J."/>
            <person name="Stange-Thomann N."/>
            <person name="Barrett R."/>
            <person name="Gnerre S."/>
            <person name="Kamal M."/>
            <person name="Kamvysselis M."/>
            <person name="Mauceli E.W."/>
            <person name="Bielke C."/>
            <person name="Rudd S."/>
            <person name="Frishman D."/>
            <person name="Krystofova S."/>
            <person name="Rasmussen C."/>
            <person name="Metzenberg R.L."/>
            <person name="Perkins D.D."/>
            <person name="Kroken S."/>
            <person name="Cogoni C."/>
            <person name="Macino G."/>
            <person name="Catcheside D.E.A."/>
            <person name="Li W."/>
            <person name="Pratt R.J."/>
            <person name="Osmani S.A."/>
            <person name="DeSouza C.P.C."/>
            <person name="Glass N.L."/>
            <person name="Orbach M.J."/>
            <person name="Berglund J.A."/>
            <person name="Voelker R."/>
            <person name="Yarden O."/>
            <person name="Plamann M."/>
            <person name="Seiler S."/>
            <person name="Dunlap J.C."/>
            <person name="Radford A."/>
            <person name="Aramayo R."/>
            <person name="Natvig D.O."/>
            <person name="Alex L.A."/>
            <person name="Mannhaupt G."/>
            <person name="Ebbole D.J."/>
            <person name="Freitag M."/>
            <person name="Paulsen I."/>
            <person name="Sachs M.S."/>
            <person name="Lander E.S."/>
            <person name="Nusbaum C."/>
            <person name="Birren B.W."/>
        </authorList>
    </citation>
    <scope>NUCLEOTIDE SEQUENCE [LARGE SCALE GENOMIC DNA]</scope>
    <source>
        <strain>ATCC 24698 / 74-OR23-1A / CBS 708.71 / DSM 1257 / FGSC 987</strain>
    </source>
</reference>
<gene>
    <name type="primary">bli-4</name>
    <name type="ORF">B24M22.250</name>
    <name type="ORF">NCU08699</name>
</gene>
<accession>Q92247</accession>
<accession>Q7RVJ1</accession>